<name>PRKX_MOUSE</name>
<feature type="chain" id="PRO_0000086583" description="cAMP-dependent protein kinase catalytic subunit PRKX">
    <location>
        <begin position="1"/>
        <end position="355"/>
    </location>
</feature>
<feature type="domain" description="Protein kinase" evidence="3">
    <location>
        <begin position="46"/>
        <end position="300"/>
    </location>
</feature>
<feature type="domain" description="AGC-kinase C-terminal" evidence="4">
    <location>
        <begin position="301"/>
        <end position="355"/>
    </location>
</feature>
<feature type="region of interest" description="Disordered" evidence="6">
    <location>
        <begin position="1"/>
        <end position="42"/>
    </location>
</feature>
<feature type="region of interest" description="Disordered" evidence="6">
    <location>
        <begin position="316"/>
        <end position="355"/>
    </location>
</feature>
<feature type="compositionally biased region" description="Basic and acidic residues" evidence="6">
    <location>
        <begin position="337"/>
        <end position="355"/>
    </location>
</feature>
<feature type="active site" description="Proton acceptor" evidence="3 5">
    <location>
        <position position="169"/>
    </location>
</feature>
<feature type="binding site" evidence="3">
    <location>
        <begin position="52"/>
        <end position="60"/>
    </location>
    <ligand>
        <name>ATP</name>
        <dbReference type="ChEBI" id="CHEBI:30616"/>
    </ligand>
</feature>
<feature type="binding site" evidence="3">
    <location>
        <position position="75"/>
    </location>
    <ligand>
        <name>ATP</name>
        <dbReference type="ChEBI" id="CHEBI:30616"/>
    </ligand>
</feature>
<feature type="modified residue" description="N-acetylmethionine" evidence="2">
    <location>
        <position position="1"/>
    </location>
</feature>
<feature type="modified residue" description="Phosphothreonine" evidence="13">
    <location>
        <position position="200"/>
    </location>
</feature>
<feature type="sequence conflict" description="In Ref. 1; CAB57279." evidence="12" ref="1">
    <original>Y</original>
    <variation>C</variation>
    <location>
        <position position="71"/>
    </location>
</feature>
<feature type="sequence conflict" description="In Ref. 1; CAB57279." evidence="12" ref="1">
    <original>E</original>
    <variation>G</variation>
    <location>
        <position position="88"/>
    </location>
</feature>
<protein>
    <recommendedName>
        <fullName>cAMP-dependent protein kinase catalytic subunit PRKX</fullName>
        <shortName>PrKX</shortName>
        <shortName>Protein kinase X</shortName>
        <shortName>Protein kinase X-linked</shortName>
        <shortName>Serine/threonine-protein kinase PRKX</shortName>
        <ecNumber>2.7.11.1</ecNumber>
    </recommendedName>
    <alternativeName>
        <fullName>PKA-related protein kinase</fullName>
    </alternativeName>
</protein>
<keyword id="KW-0007">Acetylation</keyword>
<keyword id="KW-0037">Angiogenesis</keyword>
<keyword id="KW-0067">ATP-binding</keyword>
<keyword id="KW-0114">cAMP</keyword>
<keyword id="KW-0963">Cytoplasm</keyword>
<keyword id="KW-0217">Developmental protein</keyword>
<keyword id="KW-0221">Differentiation</keyword>
<keyword id="KW-0418">Kinase</keyword>
<keyword id="KW-0547">Nucleotide-binding</keyword>
<keyword id="KW-0539">Nucleus</keyword>
<keyword id="KW-0597">Phosphoprotein</keyword>
<keyword id="KW-1185">Reference proteome</keyword>
<keyword id="KW-0723">Serine/threonine-protein kinase</keyword>
<keyword id="KW-0808">Transferase</keyword>
<gene>
    <name type="primary">Prkx</name>
    <name type="synonym">Pkare</name>
</gene>
<reference key="1">
    <citation type="journal article" date="2000" name="Genomics">
        <title>A novel murine PKA-related protein kinase involved in neuronal differentiation.</title>
        <authorList>
            <person name="Blaschke R.J."/>
            <person name="Monaghan P.A."/>
            <person name="Bock D."/>
            <person name="Rappold G.A."/>
        </authorList>
    </citation>
    <scope>NUCLEOTIDE SEQUENCE [MRNA]</scope>
    <scope>TISSUE SPECIFICITY</scope>
    <scope>DEVELOPMENTAL STAGE</scope>
    <source>
        <tissue>Brain</tissue>
    </source>
</reference>
<reference key="2">
    <citation type="journal article" date="2005" name="Science">
        <title>The transcriptional landscape of the mammalian genome.</title>
        <authorList>
            <person name="Carninci P."/>
            <person name="Kasukawa T."/>
            <person name="Katayama S."/>
            <person name="Gough J."/>
            <person name="Frith M.C."/>
            <person name="Maeda N."/>
            <person name="Oyama R."/>
            <person name="Ravasi T."/>
            <person name="Lenhard B."/>
            <person name="Wells C."/>
            <person name="Kodzius R."/>
            <person name="Shimokawa K."/>
            <person name="Bajic V.B."/>
            <person name="Brenner S.E."/>
            <person name="Batalov S."/>
            <person name="Forrest A.R."/>
            <person name="Zavolan M."/>
            <person name="Davis M.J."/>
            <person name="Wilming L.G."/>
            <person name="Aidinis V."/>
            <person name="Allen J.E."/>
            <person name="Ambesi-Impiombato A."/>
            <person name="Apweiler R."/>
            <person name="Aturaliya R.N."/>
            <person name="Bailey T.L."/>
            <person name="Bansal M."/>
            <person name="Baxter L."/>
            <person name="Beisel K.W."/>
            <person name="Bersano T."/>
            <person name="Bono H."/>
            <person name="Chalk A.M."/>
            <person name="Chiu K.P."/>
            <person name="Choudhary V."/>
            <person name="Christoffels A."/>
            <person name="Clutterbuck D.R."/>
            <person name="Crowe M.L."/>
            <person name="Dalla E."/>
            <person name="Dalrymple B.P."/>
            <person name="de Bono B."/>
            <person name="Della Gatta G."/>
            <person name="di Bernardo D."/>
            <person name="Down T."/>
            <person name="Engstrom P."/>
            <person name="Fagiolini M."/>
            <person name="Faulkner G."/>
            <person name="Fletcher C.F."/>
            <person name="Fukushima T."/>
            <person name="Furuno M."/>
            <person name="Futaki S."/>
            <person name="Gariboldi M."/>
            <person name="Georgii-Hemming P."/>
            <person name="Gingeras T.R."/>
            <person name="Gojobori T."/>
            <person name="Green R.E."/>
            <person name="Gustincich S."/>
            <person name="Harbers M."/>
            <person name="Hayashi Y."/>
            <person name="Hensch T.K."/>
            <person name="Hirokawa N."/>
            <person name="Hill D."/>
            <person name="Huminiecki L."/>
            <person name="Iacono M."/>
            <person name="Ikeo K."/>
            <person name="Iwama A."/>
            <person name="Ishikawa T."/>
            <person name="Jakt M."/>
            <person name="Kanapin A."/>
            <person name="Katoh M."/>
            <person name="Kawasawa Y."/>
            <person name="Kelso J."/>
            <person name="Kitamura H."/>
            <person name="Kitano H."/>
            <person name="Kollias G."/>
            <person name="Krishnan S.P."/>
            <person name="Kruger A."/>
            <person name="Kummerfeld S.K."/>
            <person name="Kurochkin I.V."/>
            <person name="Lareau L.F."/>
            <person name="Lazarevic D."/>
            <person name="Lipovich L."/>
            <person name="Liu J."/>
            <person name="Liuni S."/>
            <person name="McWilliam S."/>
            <person name="Madan Babu M."/>
            <person name="Madera M."/>
            <person name="Marchionni L."/>
            <person name="Matsuda H."/>
            <person name="Matsuzawa S."/>
            <person name="Miki H."/>
            <person name="Mignone F."/>
            <person name="Miyake S."/>
            <person name="Morris K."/>
            <person name="Mottagui-Tabar S."/>
            <person name="Mulder N."/>
            <person name="Nakano N."/>
            <person name="Nakauchi H."/>
            <person name="Ng P."/>
            <person name="Nilsson R."/>
            <person name="Nishiguchi S."/>
            <person name="Nishikawa S."/>
            <person name="Nori F."/>
            <person name="Ohara O."/>
            <person name="Okazaki Y."/>
            <person name="Orlando V."/>
            <person name="Pang K.C."/>
            <person name="Pavan W.J."/>
            <person name="Pavesi G."/>
            <person name="Pesole G."/>
            <person name="Petrovsky N."/>
            <person name="Piazza S."/>
            <person name="Reed J."/>
            <person name="Reid J.F."/>
            <person name="Ring B.Z."/>
            <person name="Ringwald M."/>
            <person name="Rost B."/>
            <person name="Ruan Y."/>
            <person name="Salzberg S.L."/>
            <person name="Sandelin A."/>
            <person name="Schneider C."/>
            <person name="Schoenbach C."/>
            <person name="Sekiguchi K."/>
            <person name="Semple C.A."/>
            <person name="Seno S."/>
            <person name="Sessa L."/>
            <person name="Sheng Y."/>
            <person name="Shibata Y."/>
            <person name="Shimada H."/>
            <person name="Shimada K."/>
            <person name="Silva D."/>
            <person name="Sinclair B."/>
            <person name="Sperling S."/>
            <person name="Stupka E."/>
            <person name="Sugiura K."/>
            <person name="Sultana R."/>
            <person name="Takenaka Y."/>
            <person name="Taki K."/>
            <person name="Tammoja K."/>
            <person name="Tan S.L."/>
            <person name="Tang S."/>
            <person name="Taylor M.S."/>
            <person name="Tegner J."/>
            <person name="Teichmann S.A."/>
            <person name="Ueda H.R."/>
            <person name="van Nimwegen E."/>
            <person name="Verardo R."/>
            <person name="Wei C.L."/>
            <person name="Yagi K."/>
            <person name="Yamanishi H."/>
            <person name="Zabarovsky E."/>
            <person name="Zhu S."/>
            <person name="Zimmer A."/>
            <person name="Hide W."/>
            <person name="Bult C."/>
            <person name="Grimmond S.M."/>
            <person name="Teasdale R.D."/>
            <person name="Liu E.T."/>
            <person name="Brusic V."/>
            <person name="Quackenbush J."/>
            <person name="Wahlestedt C."/>
            <person name="Mattick J.S."/>
            <person name="Hume D.A."/>
            <person name="Kai C."/>
            <person name="Sasaki D."/>
            <person name="Tomaru Y."/>
            <person name="Fukuda S."/>
            <person name="Kanamori-Katayama M."/>
            <person name="Suzuki M."/>
            <person name="Aoki J."/>
            <person name="Arakawa T."/>
            <person name="Iida J."/>
            <person name="Imamura K."/>
            <person name="Itoh M."/>
            <person name="Kato T."/>
            <person name="Kawaji H."/>
            <person name="Kawagashira N."/>
            <person name="Kawashima T."/>
            <person name="Kojima M."/>
            <person name="Kondo S."/>
            <person name="Konno H."/>
            <person name="Nakano K."/>
            <person name="Ninomiya N."/>
            <person name="Nishio T."/>
            <person name="Okada M."/>
            <person name="Plessy C."/>
            <person name="Shibata K."/>
            <person name="Shiraki T."/>
            <person name="Suzuki S."/>
            <person name="Tagami M."/>
            <person name="Waki K."/>
            <person name="Watahiki A."/>
            <person name="Okamura-Oho Y."/>
            <person name="Suzuki H."/>
            <person name="Kawai J."/>
            <person name="Hayashizaki Y."/>
        </authorList>
    </citation>
    <scope>NUCLEOTIDE SEQUENCE [LARGE SCALE MRNA]</scope>
    <source>
        <strain>C57BL/6J</strain>
        <strain>NOD</strain>
        <tissue>Bone</tissue>
        <tissue>Bone marrow</tissue>
        <tissue>Egg</tissue>
        <tissue>Embryo</tissue>
        <tissue>Head</tissue>
        <tissue>Hypothalamus</tissue>
        <tissue>Vagina</tissue>
    </source>
</reference>
<reference key="3">
    <citation type="journal article" date="2009" name="PLoS Biol.">
        <title>Lineage-specific biology revealed by a finished genome assembly of the mouse.</title>
        <authorList>
            <person name="Church D.M."/>
            <person name="Goodstadt L."/>
            <person name="Hillier L.W."/>
            <person name="Zody M.C."/>
            <person name="Goldstein S."/>
            <person name="She X."/>
            <person name="Bult C.J."/>
            <person name="Agarwala R."/>
            <person name="Cherry J.L."/>
            <person name="DiCuccio M."/>
            <person name="Hlavina W."/>
            <person name="Kapustin Y."/>
            <person name="Meric P."/>
            <person name="Maglott D."/>
            <person name="Birtle Z."/>
            <person name="Marques A.C."/>
            <person name="Graves T."/>
            <person name="Zhou S."/>
            <person name="Teague B."/>
            <person name="Potamousis K."/>
            <person name="Churas C."/>
            <person name="Place M."/>
            <person name="Herschleb J."/>
            <person name="Runnheim R."/>
            <person name="Forrest D."/>
            <person name="Amos-Landgraf J."/>
            <person name="Schwartz D.C."/>
            <person name="Cheng Z."/>
            <person name="Lindblad-Toh K."/>
            <person name="Eichler E.E."/>
            <person name="Ponting C.P."/>
        </authorList>
    </citation>
    <scope>NUCLEOTIDE SEQUENCE [LARGE SCALE GENOMIC DNA]</scope>
    <source>
        <strain>C57BL/6J</strain>
    </source>
</reference>
<reference key="4">
    <citation type="journal article" date="2004" name="Genome Res.">
        <title>The status, quality, and expansion of the NIH full-length cDNA project: the Mammalian Gene Collection (MGC).</title>
        <authorList>
            <consortium name="The MGC Project Team"/>
        </authorList>
    </citation>
    <scope>NUCLEOTIDE SEQUENCE [LARGE SCALE MRNA]</scope>
</reference>
<reference key="5">
    <citation type="journal article" date="2004" name="Mol. Cell. Proteomics">
        <title>Phosphoproteomic analysis of the developing mouse brain.</title>
        <authorList>
            <person name="Ballif B.A."/>
            <person name="Villen J."/>
            <person name="Beausoleil S.A."/>
            <person name="Schwartz D."/>
            <person name="Gygi S.P."/>
        </authorList>
    </citation>
    <scope>IDENTIFICATION BY MASS SPECTROMETRY [LARGE SCALE ANALYSIS]</scope>
    <source>
        <tissue>Embryonic brain</tissue>
    </source>
</reference>
<reference key="6">
    <citation type="journal article" date="2005" name="J. Am. Soc. Nephrol.">
        <title>Protein kinase X activates ureteric bud branching morphogenesis in developing mouse metanephric kidney.</title>
        <authorList>
            <person name="Li X."/>
            <person name="Hyink D.P."/>
            <person name="Polgar K."/>
            <person name="Gusella G.L."/>
            <person name="Wilson P.D."/>
            <person name="Burrow C.R."/>
        </authorList>
    </citation>
    <scope>FUNCTION IN NEPHROGENESIS</scope>
</reference>
<reference key="7">
    <citation type="journal article" date="2005" name="J. Histochem. Cytochem.">
        <title>Profiles of PrKX expression in developmental mouse embryo and human tissues.</title>
        <authorList>
            <person name="Li W."/>
            <person name="Yu Z.X."/>
            <person name="Kotin R.M."/>
        </authorList>
    </citation>
    <scope>DEVELOPMENTAL STAGE</scope>
</reference>
<reference key="8">
    <citation type="journal article" date="2009" name="Kidney Int.">
        <title>Protein kinase-X interacts with Pin-1 and Polycystin-1 during mouse kidney development.</title>
        <authorList>
            <person name="Li X."/>
            <person name="Hyink D.P."/>
            <person name="Radbill B."/>
            <person name="Sudol M."/>
            <person name="Zhang H."/>
            <person name="Zheleznova N.N."/>
            <person name="Wilson P.D."/>
        </authorList>
    </citation>
    <scope>FUNCTION IN NEPHROGENESIS</scope>
    <scope>INTERACTION WITH PIN1</scope>
</reference>
<reference key="9">
    <citation type="journal article" date="2010" name="Cell">
        <title>A tissue-specific atlas of mouse protein phosphorylation and expression.</title>
        <authorList>
            <person name="Huttlin E.L."/>
            <person name="Jedrychowski M.P."/>
            <person name="Elias J.E."/>
            <person name="Goswami T."/>
            <person name="Rad R."/>
            <person name="Beausoleil S.A."/>
            <person name="Villen J."/>
            <person name="Haas W."/>
            <person name="Sowa M.E."/>
            <person name="Gygi S.P."/>
        </authorList>
    </citation>
    <scope>PHOSPHORYLATION [LARGE SCALE ANALYSIS] AT THR-200</scope>
    <scope>IDENTIFICATION BY MASS SPECTROMETRY [LARGE SCALE ANALYSIS]</scope>
    <source>
        <tissue>Lung</tissue>
        <tissue>Testis</tissue>
    </source>
</reference>
<reference key="10">
    <citation type="journal article" date="2010" name="J. Biol. Chem.">
        <title>Regulation of cAMP-dependent protein kinases: the human protein kinase X (PrKX) reveals the role of the catalytic subunit alphaH-alphaI loop.</title>
        <authorList>
            <person name="Diskar M."/>
            <person name="Zenn H.M."/>
            <person name="Kaupisch A."/>
            <person name="Kaufholz M."/>
            <person name="Brockmeyer S."/>
            <person name="Sohmen D."/>
            <person name="Berrera M."/>
            <person name="Zaccolo M."/>
            <person name="Boshart M."/>
            <person name="Herberg F.W."/>
            <person name="Prinz A."/>
        </authorList>
    </citation>
    <scope>INTERACTION WITH PRKAR1A AND PRKAR1B</scope>
</reference>
<reference key="11">
    <citation type="journal article" date="2011" name="Dev. Biol.">
        <title>PRKX critically regulates endothelial cell proliferation, migration, and vascular-like structure formation.</title>
        <authorList>
            <person name="Li X."/>
            <person name="Iomini C."/>
            <person name="Hyink D."/>
            <person name="Wilson P.D."/>
        </authorList>
    </citation>
    <scope>FUNCTION IN ANGIOGENESIS</scope>
</reference>
<proteinExistence type="evidence at protein level"/>
<dbReference type="EC" id="2.7.11.1"/>
<dbReference type="EMBL" id="AK034681">
    <property type="protein sequence ID" value="BAC28796.1"/>
    <property type="molecule type" value="mRNA"/>
</dbReference>
<dbReference type="EMBL" id="AK036432">
    <property type="protein sequence ID" value="BAC29427.1"/>
    <property type="molecule type" value="mRNA"/>
</dbReference>
<dbReference type="EMBL" id="AK037141">
    <property type="protein sequence ID" value="BAC29717.1"/>
    <property type="molecule type" value="mRNA"/>
</dbReference>
<dbReference type="EMBL" id="AK039088">
    <property type="protein sequence ID" value="BAC30234.1"/>
    <property type="molecule type" value="mRNA"/>
</dbReference>
<dbReference type="EMBL" id="AK081548">
    <property type="protein sequence ID" value="BAC38254.1"/>
    <property type="molecule type" value="mRNA"/>
</dbReference>
<dbReference type="EMBL" id="AK139510">
    <property type="protein sequence ID" value="BAE24043.1"/>
    <property type="molecule type" value="mRNA"/>
</dbReference>
<dbReference type="EMBL" id="AK150588">
    <property type="protein sequence ID" value="BAE29682.1"/>
    <property type="molecule type" value="mRNA"/>
</dbReference>
<dbReference type="EMBL" id="AK154447">
    <property type="protein sequence ID" value="BAE32592.1"/>
    <property type="molecule type" value="mRNA"/>
</dbReference>
<dbReference type="EMBL" id="AK169322">
    <property type="protein sequence ID" value="BAE41076.1"/>
    <property type="molecule type" value="mRNA"/>
</dbReference>
<dbReference type="EMBL" id="AJ238004">
    <property type="protein sequence ID" value="CAB57279.1"/>
    <property type="molecule type" value="mRNA"/>
</dbReference>
<dbReference type="EMBL" id="AL714017">
    <property type="status" value="NOT_ANNOTATED_CDS"/>
    <property type="molecule type" value="Genomic_DNA"/>
</dbReference>
<dbReference type="EMBL" id="BC006875">
    <property type="protein sequence ID" value="AAH06875.1"/>
    <property type="molecule type" value="mRNA"/>
</dbReference>
<dbReference type="CCDS" id="CCDS30248.1"/>
<dbReference type="RefSeq" id="NP_058675.1">
    <property type="nucleotide sequence ID" value="NM_016979.2"/>
</dbReference>
<dbReference type="SMR" id="Q922R0"/>
<dbReference type="FunCoup" id="Q922R0">
    <property type="interactions" value="2201"/>
</dbReference>
<dbReference type="STRING" id="10090.ENSMUSP00000045304"/>
<dbReference type="iPTMnet" id="Q922R0"/>
<dbReference type="PhosphoSitePlus" id="Q922R0"/>
<dbReference type="jPOST" id="Q922R0"/>
<dbReference type="PaxDb" id="10090-ENSMUSP00000045304"/>
<dbReference type="ProteomicsDB" id="291562"/>
<dbReference type="Pumba" id="Q922R0"/>
<dbReference type="Antibodypedia" id="7924">
    <property type="antibodies" value="235 antibodies from 30 providers"/>
</dbReference>
<dbReference type="DNASU" id="19108"/>
<dbReference type="Ensembl" id="ENSMUST00000036333.14">
    <property type="protein sequence ID" value="ENSMUSP00000045304.8"/>
    <property type="gene ID" value="ENSMUSG00000035725.14"/>
</dbReference>
<dbReference type="GeneID" id="19108"/>
<dbReference type="KEGG" id="mmu:19108"/>
<dbReference type="UCSC" id="uc009tqp.2">
    <property type="organism name" value="mouse"/>
</dbReference>
<dbReference type="AGR" id="MGI:1309999"/>
<dbReference type="CTD" id="5613"/>
<dbReference type="MGI" id="MGI:1309999">
    <property type="gene designation" value="Prkx"/>
</dbReference>
<dbReference type="VEuPathDB" id="HostDB:ENSMUSG00000035725"/>
<dbReference type="eggNOG" id="KOG0616">
    <property type="taxonomic scope" value="Eukaryota"/>
</dbReference>
<dbReference type="GeneTree" id="ENSGT00940000159832"/>
<dbReference type="HOGENOM" id="CLU_000288_63_5_1"/>
<dbReference type="InParanoid" id="Q922R0"/>
<dbReference type="OMA" id="CFDDYPE"/>
<dbReference type="OrthoDB" id="10252171at2759"/>
<dbReference type="PhylomeDB" id="Q922R0"/>
<dbReference type="TreeFam" id="TF313399"/>
<dbReference type="BioGRID-ORCS" id="19108">
    <property type="hits" value="1 hit in 81 CRISPR screens"/>
</dbReference>
<dbReference type="PRO" id="PR:Q922R0"/>
<dbReference type="Proteomes" id="UP000000589">
    <property type="component" value="Chromosome X"/>
</dbReference>
<dbReference type="RNAct" id="Q922R0">
    <property type="molecule type" value="protein"/>
</dbReference>
<dbReference type="Bgee" id="ENSMUSG00000035725">
    <property type="expression patterns" value="Expressed in lumbar dorsal root ganglion and 247 other cell types or tissues"/>
</dbReference>
<dbReference type="ExpressionAtlas" id="Q922R0">
    <property type="expression patterns" value="baseline and differential"/>
</dbReference>
<dbReference type="GO" id="GO:0005737">
    <property type="term" value="C:cytoplasm"/>
    <property type="evidence" value="ECO:0000314"/>
    <property type="project" value="UniProtKB"/>
</dbReference>
<dbReference type="GO" id="GO:0005654">
    <property type="term" value="C:nucleoplasm"/>
    <property type="evidence" value="ECO:0007669"/>
    <property type="project" value="Ensembl"/>
</dbReference>
<dbReference type="GO" id="GO:0005634">
    <property type="term" value="C:nucleus"/>
    <property type="evidence" value="ECO:0000314"/>
    <property type="project" value="UniProtKB"/>
</dbReference>
<dbReference type="GO" id="GO:0005524">
    <property type="term" value="F:ATP binding"/>
    <property type="evidence" value="ECO:0007669"/>
    <property type="project" value="UniProtKB-KW"/>
</dbReference>
<dbReference type="GO" id="GO:0004691">
    <property type="term" value="F:cAMP-dependent protein kinase activity"/>
    <property type="evidence" value="ECO:0000250"/>
    <property type="project" value="UniProtKB"/>
</dbReference>
<dbReference type="GO" id="GO:0106310">
    <property type="term" value="F:protein serine kinase activity"/>
    <property type="evidence" value="ECO:0007669"/>
    <property type="project" value="RHEA"/>
</dbReference>
<dbReference type="GO" id="GO:0004674">
    <property type="term" value="F:protein serine/threonine kinase activity"/>
    <property type="evidence" value="ECO:0000250"/>
    <property type="project" value="MGI"/>
</dbReference>
<dbReference type="GO" id="GO:0001525">
    <property type="term" value="P:angiogenesis"/>
    <property type="evidence" value="ECO:0000315"/>
    <property type="project" value="UniProtKB"/>
</dbReference>
<dbReference type="GO" id="GO:0007155">
    <property type="term" value="P:cell adhesion"/>
    <property type="evidence" value="ECO:0000315"/>
    <property type="project" value="UniProtKB"/>
</dbReference>
<dbReference type="GO" id="GO:0031589">
    <property type="term" value="P:cell-substrate adhesion"/>
    <property type="evidence" value="ECO:0000250"/>
    <property type="project" value="UniProtKB"/>
</dbReference>
<dbReference type="GO" id="GO:0043542">
    <property type="term" value="P:endothelial cell migration"/>
    <property type="evidence" value="ECO:0000250"/>
    <property type="project" value="UniProtKB"/>
</dbReference>
<dbReference type="GO" id="GO:0001935">
    <property type="term" value="P:endothelial cell proliferation"/>
    <property type="evidence" value="ECO:0000315"/>
    <property type="project" value="UniProtKB"/>
</dbReference>
<dbReference type="GO" id="GO:0060562">
    <property type="term" value="P:epithelial tube morphogenesis"/>
    <property type="evidence" value="ECO:0000250"/>
    <property type="project" value="UniProtKB"/>
</dbReference>
<dbReference type="GO" id="GO:0060993">
    <property type="term" value="P:kidney morphogenesis"/>
    <property type="evidence" value="ECO:0000250"/>
    <property type="project" value="UniProtKB"/>
</dbReference>
<dbReference type="GO" id="GO:0030099">
    <property type="term" value="P:myeloid cell differentiation"/>
    <property type="evidence" value="ECO:0000250"/>
    <property type="project" value="UniProtKB"/>
</dbReference>
<dbReference type="GO" id="GO:0018105">
    <property type="term" value="P:peptidyl-serine phosphorylation"/>
    <property type="evidence" value="ECO:0000250"/>
    <property type="project" value="UniProtKB"/>
</dbReference>
<dbReference type="GO" id="GO:0046777">
    <property type="term" value="P:protein autophosphorylation"/>
    <property type="evidence" value="ECO:0000250"/>
    <property type="project" value="UniProtKB"/>
</dbReference>
<dbReference type="GO" id="GO:0030155">
    <property type="term" value="P:regulation of cell adhesion"/>
    <property type="evidence" value="ECO:0007669"/>
    <property type="project" value="Ensembl"/>
</dbReference>
<dbReference type="GO" id="GO:0030334">
    <property type="term" value="P:regulation of cell migration"/>
    <property type="evidence" value="ECO:0000250"/>
    <property type="project" value="UniProtKB"/>
</dbReference>
<dbReference type="GO" id="GO:2000696">
    <property type="term" value="P:regulation of epithelial cell differentiation involved in kidney development"/>
    <property type="evidence" value="ECO:0000250"/>
    <property type="project" value="UniProtKB"/>
</dbReference>
<dbReference type="CDD" id="cd05612">
    <property type="entry name" value="STKc_PRKX_like"/>
    <property type="match status" value="1"/>
</dbReference>
<dbReference type="FunFam" id="1.10.510.10:FF:000005">
    <property type="entry name" value="cAMP-dependent protein kinase catalytic subunit alpha"/>
    <property type="match status" value="1"/>
</dbReference>
<dbReference type="Gene3D" id="3.30.200.20">
    <property type="entry name" value="Phosphorylase Kinase, domain 1"/>
    <property type="match status" value="1"/>
</dbReference>
<dbReference type="Gene3D" id="1.10.510.10">
    <property type="entry name" value="Transferase(Phosphotransferase) domain 1"/>
    <property type="match status" value="1"/>
</dbReference>
<dbReference type="InterPro" id="IPR000961">
    <property type="entry name" value="AGC-kinase_C"/>
</dbReference>
<dbReference type="InterPro" id="IPR011009">
    <property type="entry name" value="Kinase-like_dom_sf"/>
</dbReference>
<dbReference type="InterPro" id="IPR000719">
    <property type="entry name" value="Prot_kinase_dom"/>
</dbReference>
<dbReference type="InterPro" id="IPR017441">
    <property type="entry name" value="Protein_kinase_ATP_BS"/>
</dbReference>
<dbReference type="InterPro" id="IPR008271">
    <property type="entry name" value="Ser/Thr_kinase_AS"/>
</dbReference>
<dbReference type="PANTHER" id="PTHR24353:SF37">
    <property type="entry name" value="CAMP-DEPENDENT PROTEIN KINASE CATALYTIC SUBUNIT PRKX"/>
    <property type="match status" value="1"/>
</dbReference>
<dbReference type="PANTHER" id="PTHR24353">
    <property type="entry name" value="CYCLIC NUCLEOTIDE-DEPENDENT PROTEIN KINASE"/>
    <property type="match status" value="1"/>
</dbReference>
<dbReference type="Pfam" id="PF00069">
    <property type="entry name" value="Pkinase"/>
    <property type="match status" value="1"/>
</dbReference>
<dbReference type="SMART" id="SM00133">
    <property type="entry name" value="S_TK_X"/>
    <property type="match status" value="1"/>
</dbReference>
<dbReference type="SMART" id="SM00220">
    <property type="entry name" value="S_TKc"/>
    <property type="match status" value="1"/>
</dbReference>
<dbReference type="SUPFAM" id="SSF56112">
    <property type="entry name" value="Protein kinase-like (PK-like)"/>
    <property type="match status" value="1"/>
</dbReference>
<dbReference type="PROSITE" id="PS51285">
    <property type="entry name" value="AGC_KINASE_CTER"/>
    <property type="match status" value="1"/>
</dbReference>
<dbReference type="PROSITE" id="PS00107">
    <property type="entry name" value="PROTEIN_KINASE_ATP"/>
    <property type="match status" value="1"/>
</dbReference>
<dbReference type="PROSITE" id="PS50011">
    <property type="entry name" value="PROTEIN_KINASE_DOM"/>
    <property type="match status" value="1"/>
</dbReference>
<dbReference type="PROSITE" id="PS00108">
    <property type="entry name" value="PROTEIN_KINASE_ST"/>
    <property type="match status" value="1"/>
</dbReference>
<evidence type="ECO:0000250" key="1"/>
<evidence type="ECO:0000250" key="2">
    <source>
        <dbReference type="UniProtKB" id="P51817"/>
    </source>
</evidence>
<evidence type="ECO:0000255" key="3">
    <source>
        <dbReference type="PROSITE-ProRule" id="PRU00159"/>
    </source>
</evidence>
<evidence type="ECO:0000255" key="4">
    <source>
        <dbReference type="PROSITE-ProRule" id="PRU00618"/>
    </source>
</evidence>
<evidence type="ECO:0000255" key="5">
    <source>
        <dbReference type="PROSITE-ProRule" id="PRU10027"/>
    </source>
</evidence>
<evidence type="ECO:0000256" key="6">
    <source>
        <dbReference type="SAM" id="MobiDB-lite"/>
    </source>
</evidence>
<evidence type="ECO:0000269" key="7">
    <source>
    </source>
</evidence>
<evidence type="ECO:0000269" key="8">
    <source>
    </source>
</evidence>
<evidence type="ECO:0000269" key="9">
    <source>
    </source>
</evidence>
<evidence type="ECO:0000269" key="10">
    <source>
    </source>
</evidence>
<evidence type="ECO:0000269" key="11">
    <source>
    </source>
</evidence>
<evidence type="ECO:0000305" key="12"/>
<evidence type="ECO:0007744" key="13">
    <source>
    </source>
</evidence>
<organism>
    <name type="scientific">Mus musculus</name>
    <name type="common">Mouse</name>
    <dbReference type="NCBI Taxonomy" id="10090"/>
    <lineage>
        <taxon>Eukaryota</taxon>
        <taxon>Metazoa</taxon>
        <taxon>Chordata</taxon>
        <taxon>Craniata</taxon>
        <taxon>Vertebrata</taxon>
        <taxon>Euteleostomi</taxon>
        <taxon>Mammalia</taxon>
        <taxon>Eutheria</taxon>
        <taxon>Euarchontoglires</taxon>
        <taxon>Glires</taxon>
        <taxon>Rodentia</taxon>
        <taxon>Myomorpha</taxon>
        <taxon>Muroidea</taxon>
        <taxon>Muridae</taxon>
        <taxon>Murinae</taxon>
        <taxon>Mus</taxon>
        <taxon>Mus</taxon>
    </lineage>
</organism>
<accession>Q922R0</accession>
<accession>B1AVU0</accession>
<accession>Q3UCD1</accession>
<accession>Q8BHD6</accession>
<accession>Q9QZ12</accession>
<sequence>MEPPAGAAATVKDPDHDPVKTKVSAPAADPKPRTSSQKAGHSLQDWDTIATVGTGTFGRVNLVKEKTGRQYCALKIMSIPDVIRLKQEQHVQNEKAVLKEINHPFLIKLLWTGHDNRFLYMLMEFVPGGELFTYLRNRGRFSSVASVFYATEIVCAIEYLHSKEIVYRDLKPENILLDREGHIKLTDFGFAKKLVDRTWTLCGTPEYLAPEVIQSKGHGRAVDWWALGILIFEMLSGFPPFFDDNPFGIYQKILACKIDFPRQLDFTSKDLIKKLLVVDRTRRLGNMKNGAEDIKRHRWFRGVEWESVPQRKLKPPIVPKLSGDGDISNFETYPESELDKTPSVSDKDLETFKNF</sequence>
<comment type="function">
    <text evidence="9 10 11">Serine/threonine protein kinase regulated by and mediating cAMP signaling in cells. Acts through phosphorylation of downstream targets that may include CREB, SMAD6 and PKD1 and has multiple functions in cellular differentiation and epithelial morphogenesis. Regulates myeloid cell differentiation through SMAD6 phosphorylation. Involved in nephrogenesis by stimulating renal epithelial cell migration and tubulogenesis. Also involved in angiogenesis through stimulation of endothelial cell proliferation, migration and vascular-like structure formation.</text>
</comment>
<comment type="catalytic activity">
    <reaction>
        <text>L-seryl-[protein] + ATP = O-phospho-L-seryl-[protein] + ADP + H(+)</text>
        <dbReference type="Rhea" id="RHEA:17989"/>
        <dbReference type="Rhea" id="RHEA-COMP:9863"/>
        <dbReference type="Rhea" id="RHEA-COMP:11604"/>
        <dbReference type="ChEBI" id="CHEBI:15378"/>
        <dbReference type="ChEBI" id="CHEBI:29999"/>
        <dbReference type="ChEBI" id="CHEBI:30616"/>
        <dbReference type="ChEBI" id="CHEBI:83421"/>
        <dbReference type="ChEBI" id="CHEBI:456216"/>
        <dbReference type="EC" id="2.7.11.1"/>
    </reaction>
</comment>
<comment type="catalytic activity">
    <reaction>
        <text>L-threonyl-[protein] + ATP = O-phospho-L-threonyl-[protein] + ADP + H(+)</text>
        <dbReference type="Rhea" id="RHEA:46608"/>
        <dbReference type="Rhea" id="RHEA-COMP:11060"/>
        <dbReference type="Rhea" id="RHEA-COMP:11605"/>
        <dbReference type="ChEBI" id="CHEBI:15378"/>
        <dbReference type="ChEBI" id="CHEBI:30013"/>
        <dbReference type="ChEBI" id="CHEBI:30616"/>
        <dbReference type="ChEBI" id="CHEBI:61977"/>
        <dbReference type="ChEBI" id="CHEBI:456216"/>
        <dbReference type="EC" id="2.7.11.1"/>
    </reaction>
</comment>
<comment type="activity regulation">
    <text evidence="1">Binding of cAMP to the PRKAR1A or PRKAR1B regulatory subunits induces dissociation of the holoenzyme heterotetramer. The released monomeric PRKX is then active and able to phosphorylate its substrates (By similarity).</text>
</comment>
<comment type="subunit">
    <text evidence="1">Like other cAMP-dependent protein kinases, the inactive holoenzyme is probably composed of 2 PRKX catalytic subunits and a dimer of regulatory subunits. Interacts (cAMP-dependent) specifically with the regulatory subunits PRKAR1A and PRKAR1B. Compared to other cAMP-dependent serine/threonine protein kinases, does not interact with the 2 other PKA regulatory subunits PRKAR2A and PRKAR2B. Interacts with PIN1 (via WW domain). Interacts with cAMP-dependent protein kinase inhibitor/PKI proteins; inhibits PRKX (By similarity). Interacts with GPKOW (By similarity). Interacts with SMAD6 (By similarity). Interacts with PKD1; involved in differentiation and controlled morphogenesis of the kidney (By similarity).</text>
</comment>
<comment type="subcellular location">
    <subcellularLocation>
        <location evidence="1">Cytoplasm</location>
    </subcellularLocation>
    <subcellularLocation>
        <location evidence="1">Nucleus</location>
    </subcellularLocation>
    <text evidence="1">cAMP induces nuclear translocation.</text>
</comment>
<comment type="tissue specificity">
    <text evidence="7">Widely expressed.</text>
</comment>
<comment type="developmental stage">
    <text evidence="7 8">Expressed in central nervous system and heart tissues in early development stages and in most organs at later stages (at protein level). Detected in embryos from 9 dpc onward with higher expression in differentiating neuronal tissues at 11.5 dpc.</text>
</comment>
<comment type="PTM">
    <text evidence="1">Phosphorylated; autophosphorylates in vitro.</text>
</comment>
<comment type="similarity">
    <text evidence="12">Belongs to the protein kinase superfamily. AGC Ser/Thr protein kinase family. cAMP subfamily.</text>
</comment>